<proteinExistence type="inferred from homology"/>
<evidence type="ECO:0000255" key="1">
    <source>
        <dbReference type="HAMAP-Rule" id="MF_00445"/>
    </source>
</evidence>
<sequence>MTITPQQLIAMLPLLIVGLTVVVVMLSIAWRRDHFINATLTVIGLNLALLSLYFVGQVGPMDVTPLMRVDGYSMFYTGLVIIASLATSTFAYPWLVGYPDNREEFYLLVLIAALGGILLASANHLASLFLGIELLTLPLFGLIGYAYRQKRSLEASIKYMLLSAAASSFLLFGMALLYAESGSLSFVGLGQSLSDSMVHQPLILAGLGMMIVGLGFKLSLVPFQLWTPDVYQGAPAPVSTFLATASKIAIFAVVMRLFMYAPAADSEAVRLVLSIIAVASILFGNLMAISQTNIKRLLGYSSIAHLGYLLIALVAVQTHELALPLETIGVYLAGYLFSSLGAFGVVSLMSSPYKGPDAESLFSYRGLFWHKPILSAVMTVMMLSLAGIPMTLGFIGKFFVVAMGVSANLWWLTGAVVLGSAIGLYYYLRVTVSLFLSPPQSLVRDTPSNWALTAGGVVVLISAILVLVLGIYPQPLITLVQMAQPLM</sequence>
<organism>
    <name type="scientific">Yersinia pseudotuberculosis serotype IB (strain PB1/+)</name>
    <dbReference type="NCBI Taxonomy" id="502801"/>
    <lineage>
        <taxon>Bacteria</taxon>
        <taxon>Pseudomonadati</taxon>
        <taxon>Pseudomonadota</taxon>
        <taxon>Gammaproteobacteria</taxon>
        <taxon>Enterobacterales</taxon>
        <taxon>Yersiniaceae</taxon>
        <taxon>Yersinia</taxon>
    </lineage>
</organism>
<protein>
    <recommendedName>
        <fullName evidence="1">NADH-quinone oxidoreductase subunit N</fullName>
        <ecNumber evidence="1">7.1.1.-</ecNumber>
    </recommendedName>
    <alternativeName>
        <fullName evidence="1">NADH dehydrogenase I subunit N</fullName>
    </alternativeName>
    <alternativeName>
        <fullName evidence="1">NDH-1 subunit N</fullName>
    </alternativeName>
</protein>
<gene>
    <name evidence="1" type="primary">nuoN</name>
    <name type="ordered locus">YPTS_2670</name>
</gene>
<keyword id="KW-0997">Cell inner membrane</keyword>
<keyword id="KW-1003">Cell membrane</keyword>
<keyword id="KW-0472">Membrane</keyword>
<keyword id="KW-0520">NAD</keyword>
<keyword id="KW-0874">Quinone</keyword>
<keyword id="KW-1278">Translocase</keyword>
<keyword id="KW-0812">Transmembrane</keyword>
<keyword id="KW-1133">Transmembrane helix</keyword>
<keyword id="KW-0813">Transport</keyword>
<keyword id="KW-0830">Ubiquinone</keyword>
<feature type="chain" id="PRO_1000145881" description="NADH-quinone oxidoreductase subunit N">
    <location>
        <begin position="1"/>
        <end position="487"/>
    </location>
</feature>
<feature type="transmembrane region" description="Helical" evidence="1">
    <location>
        <begin position="8"/>
        <end position="28"/>
    </location>
</feature>
<feature type="transmembrane region" description="Helical" evidence="1">
    <location>
        <begin position="35"/>
        <end position="55"/>
    </location>
</feature>
<feature type="transmembrane region" description="Helical" evidence="1">
    <location>
        <begin position="78"/>
        <end position="98"/>
    </location>
</feature>
<feature type="transmembrane region" description="Helical" evidence="1">
    <location>
        <begin position="104"/>
        <end position="124"/>
    </location>
</feature>
<feature type="transmembrane region" description="Helical" evidence="1">
    <location>
        <begin position="125"/>
        <end position="145"/>
    </location>
</feature>
<feature type="transmembrane region" description="Helical" evidence="1">
    <location>
        <begin position="159"/>
        <end position="179"/>
    </location>
</feature>
<feature type="transmembrane region" description="Helical" evidence="1">
    <location>
        <begin position="203"/>
        <end position="223"/>
    </location>
</feature>
<feature type="transmembrane region" description="Helical" evidence="1">
    <location>
        <begin position="235"/>
        <end position="255"/>
    </location>
</feature>
<feature type="transmembrane region" description="Helical" evidence="1">
    <location>
        <begin position="271"/>
        <end position="291"/>
    </location>
</feature>
<feature type="transmembrane region" description="Helical" evidence="1">
    <location>
        <begin position="297"/>
        <end position="317"/>
    </location>
</feature>
<feature type="transmembrane region" description="Helical" evidence="1">
    <location>
        <begin position="328"/>
        <end position="348"/>
    </location>
</feature>
<feature type="transmembrane region" description="Helical" evidence="1">
    <location>
        <begin position="376"/>
        <end position="396"/>
    </location>
</feature>
<feature type="transmembrane region" description="Helical" evidence="1">
    <location>
        <begin position="409"/>
        <end position="428"/>
    </location>
</feature>
<feature type="transmembrane region" description="Helical" evidence="1">
    <location>
        <begin position="451"/>
        <end position="471"/>
    </location>
</feature>
<reference key="1">
    <citation type="submission" date="2008-04" db="EMBL/GenBank/DDBJ databases">
        <title>Complete sequence of Yersinia pseudotuberculosis PB1/+.</title>
        <authorList>
            <person name="Copeland A."/>
            <person name="Lucas S."/>
            <person name="Lapidus A."/>
            <person name="Glavina del Rio T."/>
            <person name="Dalin E."/>
            <person name="Tice H."/>
            <person name="Bruce D."/>
            <person name="Goodwin L."/>
            <person name="Pitluck S."/>
            <person name="Munk A.C."/>
            <person name="Brettin T."/>
            <person name="Detter J.C."/>
            <person name="Han C."/>
            <person name="Tapia R."/>
            <person name="Schmutz J."/>
            <person name="Larimer F."/>
            <person name="Land M."/>
            <person name="Hauser L."/>
            <person name="Challacombe J.F."/>
            <person name="Green L."/>
            <person name="Lindler L.E."/>
            <person name="Nikolich M.P."/>
            <person name="Richardson P."/>
        </authorList>
    </citation>
    <scope>NUCLEOTIDE SEQUENCE [LARGE SCALE GENOMIC DNA]</scope>
    <source>
        <strain>PB1/+</strain>
    </source>
</reference>
<comment type="function">
    <text evidence="1">NDH-1 shuttles electrons from NADH, via FMN and iron-sulfur (Fe-S) centers, to quinones in the respiratory chain. The immediate electron acceptor for the enzyme in this species is believed to be ubiquinone. Couples the redox reaction to proton translocation (for every two electrons transferred, four hydrogen ions are translocated across the cytoplasmic membrane), and thus conserves the redox energy in a proton gradient.</text>
</comment>
<comment type="catalytic activity">
    <reaction evidence="1">
        <text>a quinone + NADH + 5 H(+)(in) = a quinol + NAD(+) + 4 H(+)(out)</text>
        <dbReference type="Rhea" id="RHEA:57888"/>
        <dbReference type="ChEBI" id="CHEBI:15378"/>
        <dbReference type="ChEBI" id="CHEBI:24646"/>
        <dbReference type="ChEBI" id="CHEBI:57540"/>
        <dbReference type="ChEBI" id="CHEBI:57945"/>
        <dbReference type="ChEBI" id="CHEBI:132124"/>
    </reaction>
</comment>
<comment type="subunit">
    <text evidence="1">NDH-1 is composed of 13 different subunits. Subunits NuoA, H, J, K, L, M, N constitute the membrane sector of the complex.</text>
</comment>
<comment type="subcellular location">
    <subcellularLocation>
        <location evidence="1">Cell inner membrane</location>
        <topology evidence="1">Multi-pass membrane protein</topology>
    </subcellularLocation>
</comment>
<comment type="similarity">
    <text evidence="1">Belongs to the complex I subunit 2 family.</text>
</comment>
<accession>B2K809</accession>
<dbReference type="EC" id="7.1.1.-" evidence="1"/>
<dbReference type="EMBL" id="CP001048">
    <property type="protein sequence ID" value="ACC89630.1"/>
    <property type="molecule type" value="Genomic_DNA"/>
</dbReference>
<dbReference type="RefSeq" id="WP_002210268.1">
    <property type="nucleotide sequence ID" value="NZ_CP009780.1"/>
</dbReference>
<dbReference type="SMR" id="B2K809"/>
<dbReference type="GeneID" id="57976146"/>
<dbReference type="KEGG" id="ypb:YPTS_2670"/>
<dbReference type="PATRIC" id="fig|502801.10.peg.2089"/>
<dbReference type="GO" id="GO:0005886">
    <property type="term" value="C:plasma membrane"/>
    <property type="evidence" value="ECO:0007669"/>
    <property type="project" value="UniProtKB-SubCell"/>
</dbReference>
<dbReference type="GO" id="GO:0008137">
    <property type="term" value="F:NADH dehydrogenase (ubiquinone) activity"/>
    <property type="evidence" value="ECO:0007669"/>
    <property type="project" value="InterPro"/>
</dbReference>
<dbReference type="GO" id="GO:0050136">
    <property type="term" value="F:NADH:ubiquinone reductase (non-electrogenic) activity"/>
    <property type="evidence" value="ECO:0007669"/>
    <property type="project" value="UniProtKB-UniRule"/>
</dbReference>
<dbReference type="GO" id="GO:0048038">
    <property type="term" value="F:quinone binding"/>
    <property type="evidence" value="ECO:0007669"/>
    <property type="project" value="UniProtKB-KW"/>
</dbReference>
<dbReference type="GO" id="GO:0042773">
    <property type="term" value="P:ATP synthesis coupled electron transport"/>
    <property type="evidence" value="ECO:0007669"/>
    <property type="project" value="InterPro"/>
</dbReference>
<dbReference type="HAMAP" id="MF_00445">
    <property type="entry name" value="NDH1_NuoN_1"/>
    <property type="match status" value="1"/>
</dbReference>
<dbReference type="InterPro" id="IPR010096">
    <property type="entry name" value="NADH-Q_OxRdtase_suN/2"/>
</dbReference>
<dbReference type="InterPro" id="IPR001750">
    <property type="entry name" value="ND/Mrp_TM"/>
</dbReference>
<dbReference type="NCBIfam" id="TIGR01770">
    <property type="entry name" value="NDH_I_N"/>
    <property type="match status" value="1"/>
</dbReference>
<dbReference type="NCBIfam" id="NF004439">
    <property type="entry name" value="PRK05777.1-1"/>
    <property type="match status" value="1"/>
</dbReference>
<dbReference type="PANTHER" id="PTHR22773">
    <property type="entry name" value="NADH DEHYDROGENASE"/>
    <property type="match status" value="1"/>
</dbReference>
<dbReference type="Pfam" id="PF00361">
    <property type="entry name" value="Proton_antipo_M"/>
    <property type="match status" value="1"/>
</dbReference>
<name>NUON_YERPB</name>